<organism>
    <name type="scientific">Paracoccidioides brasiliensis (strain Pb03)</name>
    <dbReference type="NCBI Taxonomy" id="482561"/>
    <lineage>
        <taxon>Eukaryota</taxon>
        <taxon>Fungi</taxon>
        <taxon>Dikarya</taxon>
        <taxon>Ascomycota</taxon>
        <taxon>Pezizomycotina</taxon>
        <taxon>Eurotiomycetes</taxon>
        <taxon>Eurotiomycetidae</taxon>
        <taxon>Onygenales</taxon>
        <taxon>Ajellomycetaceae</taxon>
        <taxon>Paracoccidioides</taxon>
    </lineage>
</organism>
<accession>C0S6S4</accession>
<feature type="chain" id="PRO_0000384990" description="Protein SEY1">
    <location>
        <begin position="1"/>
        <end position="872"/>
    </location>
</feature>
<feature type="topological domain" description="Cytoplasmic" evidence="1">
    <location>
        <begin position="1"/>
        <end position="749"/>
    </location>
</feature>
<feature type="transmembrane region" description="Helical" evidence="1">
    <location>
        <begin position="750"/>
        <end position="770"/>
    </location>
</feature>
<feature type="topological domain" description="Lumenal" evidence="1">
    <location>
        <begin position="771"/>
        <end position="773"/>
    </location>
</feature>
<feature type="transmembrane region" description="Helical" evidence="1">
    <location>
        <begin position="774"/>
        <end position="794"/>
    </location>
</feature>
<feature type="topological domain" description="Cytoplasmic" evidence="1">
    <location>
        <begin position="795"/>
        <end position="872"/>
    </location>
</feature>
<feature type="domain" description="GB1/RHD3-type G" evidence="2">
    <location>
        <begin position="49"/>
        <end position="294"/>
    </location>
</feature>
<feature type="region of interest" description="Disordered" evidence="3">
    <location>
        <begin position="676"/>
        <end position="704"/>
    </location>
</feature>
<feature type="region of interest" description="Disordered" evidence="3">
    <location>
        <begin position="849"/>
        <end position="872"/>
    </location>
</feature>
<feature type="coiled-coil region" evidence="1">
    <location>
        <begin position="482"/>
        <end position="504"/>
    </location>
</feature>
<feature type="compositionally biased region" description="Acidic residues" evidence="3">
    <location>
        <begin position="690"/>
        <end position="704"/>
    </location>
</feature>
<feature type="binding site" evidence="1">
    <location>
        <begin position="59"/>
        <end position="66"/>
    </location>
    <ligand>
        <name>GTP</name>
        <dbReference type="ChEBI" id="CHEBI:37565"/>
    </ligand>
</feature>
<keyword id="KW-0175">Coiled coil</keyword>
<keyword id="KW-0256">Endoplasmic reticulum</keyword>
<keyword id="KW-0342">GTP-binding</keyword>
<keyword id="KW-0378">Hydrolase</keyword>
<keyword id="KW-0472">Membrane</keyword>
<keyword id="KW-0547">Nucleotide-binding</keyword>
<keyword id="KW-0812">Transmembrane</keyword>
<keyword id="KW-1133">Transmembrane helix</keyword>
<comment type="function">
    <text evidence="1">Cooperates with the reticulon proteins and tubule-shaping DP1 family proteins to generate and maintain the structure of the tubular endoplasmic reticulum network. Has GTPase activity, which is required for its function in ER organization.</text>
</comment>
<comment type="subcellular location">
    <subcellularLocation>
        <location evidence="1">Endoplasmic reticulum membrane</location>
        <topology evidence="1">Multi-pass membrane protein</topology>
    </subcellularLocation>
    <text evidence="1">Enriched in the cortical ER. Concentrated in punctae along the ER tubules.</text>
</comment>
<comment type="similarity">
    <text evidence="2">Belongs to the TRAFAC class dynamin-like GTPase superfamily. GB1/RHD3 GTPase family. RHD3 subfamily.</text>
</comment>
<name>SEY1_PARBP</name>
<reference key="1">
    <citation type="journal article" date="2011" name="PLoS Genet.">
        <title>Comparative genomic analysis of human fungal pathogens causing paracoccidioidomycosis.</title>
        <authorList>
            <person name="Desjardins C.A."/>
            <person name="Champion M.D."/>
            <person name="Holder J.W."/>
            <person name="Muszewska A."/>
            <person name="Goldberg J."/>
            <person name="Bailao A.M."/>
            <person name="Brigido M.M."/>
            <person name="Ferreira M.E."/>
            <person name="Garcia A.M."/>
            <person name="Grynberg M."/>
            <person name="Gujja S."/>
            <person name="Heiman D.I."/>
            <person name="Henn M.R."/>
            <person name="Kodira C.D."/>
            <person name="Leon-Narvaez H."/>
            <person name="Longo L.V.G."/>
            <person name="Ma L.-J."/>
            <person name="Malavazi I."/>
            <person name="Matsuo A.L."/>
            <person name="Morais F.V."/>
            <person name="Pereira M."/>
            <person name="Rodriguez-Brito S."/>
            <person name="Sakthikumar S."/>
            <person name="Salem-Izacc S.M."/>
            <person name="Sykes S.M."/>
            <person name="Teixeira M.M."/>
            <person name="Vallejo M.C."/>
            <person name="Walter M.E."/>
            <person name="Yandava C."/>
            <person name="Young S."/>
            <person name="Zeng Q."/>
            <person name="Zucker J."/>
            <person name="Felipe M.S."/>
            <person name="Goldman G.H."/>
            <person name="Haas B.J."/>
            <person name="McEwen J.G."/>
            <person name="Nino-Vega G."/>
            <person name="Puccia R."/>
            <person name="San-Blas G."/>
            <person name="Soares C.M."/>
            <person name="Birren B.W."/>
            <person name="Cuomo C.A."/>
        </authorList>
    </citation>
    <scope>NUCLEOTIDE SEQUENCE [LARGE SCALE GENOMIC DNA]</scope>
    <source>
        <strain>Pb03</strain>
    </source>
</reference>
<dbReference type="EC" id="3.6.5.-" evidence="1"/>
<dbReference type="EMBL" id="KN305534">
    <property type="protein sequence ID" value="EEH21148.1"/>
    <property type="molecule type" value="Genomic_DNA"/>
</dbReference>
<dbReference type="SMR" id="C0S6S4"/>
<dbReference type="VEuPathDB" id="FungiDB:PABG_03379"/>
<dbReference type="HOGENOM" id="CLU_011270_0_0_1"/>
<dbReference type="OrthoDB" id="1460at33183"/>
<dbReference type="GO" id="GO:0005789">
    <property type="term" value="C:endoplasmic reticulum membrane"/>
    <property type="evidence" value="ECO:0007669"/>
    <property type="project" value="UniProtKB-SubCell"/>
</dbReference>
<dbReference type="GO" id="GO:0005525">
    <property type="term" value="F:GTP binding"/>
    <property type="evidence" value="ECO:0007669"/>
    <property type="project" value="UniProtKB-UniRule"/>
</dbReference>
<dbReference type="GO" id="GO:0003924">
    <property type="term" value="F:GTPase activity"/>
    <property type="evidence" value="ECO:0007669"/>
    <property type="project" value="UniProtKB-UniRule"/>
</dbReference>
<dbReference type="GO" id="GO:0016320">
    <property type="term" value="P:endoplasmic reticulum membrane fusion"/>
    <property type="evidence" value="ECO:0007669"/>
    <property type="project" value="TreeGrafter"/>
</dbReference>
<dbReference type="CDD" id="cd01851">
    <property type="entry name" value="GBP"/>
    <property type="match status" value="1"/>
</dbReference>
<dbReference type="FunFam" id="3.40.50.300:FF:000727">
    <property type="entry name" value="Protein SEY1 homolog"/>
    <property type="match status" value="1"/>
</dbReference>
<dbReference type="Gene3D" id="3.40.50.300">
    <property type="entry name" value="P-loop containing nucleotide triphosphate hydrolases"/>
    <property type="match status" value="1"/>
</dbReference>
<dbReference type="HAMAP" id="MF_03109">
    <property type="entry name" value="Sey1"/>
    <property type="match status" value="1"/>
</dbReference>
<dbReference type="InterPro" id="IPR030386">
    <property type="entry name" value="G_GB1_RHD3_dom"/>
</dbReference>
<dbReference type="InterPro" id="IPR027417">
    <property type="entry name" value="P-loop_NTPase"/>
</dbReference>
<dbReference type="InterPro" id="IPR008803">
    <property type="entry name" value="RHD3/Sey1"/>
</dbReference>
<dbReference type="InterPro" id="IPR046758">
    <property type="entry name" value="Sey1/RHD3-like_3HB"/>
</dbReference>
<dbReference type="PANTHER" id="PTHR45923">
    <property type="entry name" value="PROTEIN SEY1"/>
    <property type="match status" value="1"/>
</dbReference>
<dbReference type="PANTHER" id="PTHR45923:SF2">
    <property type="entry name" value="PROTEIN SEY1"/>
    <property type="match status" value="1"/>
</dbReference>
<dbReference type="Pfam" id="PF05879">
    <property type="entry name" value="RHD3_GTPase"/>
    <property type="match status" value="1"/>
</dbReference>
<dbReference type="Pfam" id="PF20428">
    <property type="entry name" value="Sey1_3HB"/>
    <property type="match status" value="1"/>
</dbReference>
<dbReference type="SUPFAM" id="SSF52540">
    <property type="entry name" value="P-loop containing nucleoside triphosphate hydrolases"/>
    <property type="match status" value="1"/>
</dbReference>
<dbReference type="PROSITE" id="PS51715">
    <property type="entry name" value="G_GB1_RHD3"/>
    <property type="match status" value="1"/>
</dbReference>
<protein>
    <recommendedName>
        <fullName evidence="1">Protein SEY1</fullName>
        <ecNumber evidence="1">3.6.5.-</ecNumber>
    </recommendedName>
</protein>
<sequence>MVANGHFAGVGDVLDAKNYEHGVQVIDEEKEFNPNLSNYLSYENVTPAGFNYHLISVFGSQSTGKSTLLNSLFGTHFSVMSETERRQTTKGIWLSKNKRLKSDKGQDNQTKMADNILVMDVEGTDGRERGEDQDFERKSALFALATSEVLIVNIWEHQVGLYQGANMGLLKTVFEVNLELFLKDKRSNPRSLLFFVIRDFLGTTPLQNLQNTLLQDLNRIWNSLSKPAGLENSSITDYFDFAFAGLPHKNFQPEKFVDEVRKLSTRFCDGHRDPNKTDAKGTSSIEGGIFLPEYHRRIPADGFAVYAEGIWDQIVNNKDLDLPTQQELLAQFRCDEISREVLVAFDEAISPFEAKQAEAVQAGNPQVLGGLGSAMCNARMKSVKNFDTEASRYHKRVYQMKKSELQDKIDSRLKALFLGQLSAAHRSGIQEFTESVTAAVKAGQKRGASYDFAEIVTKERKLAIEKFEKEARAAVVEDTQWSNYQQELSLYQKDLENIGGQLRRDEMRRLATRVGRWVRSRLGESIDLEFNAIGSGRGGSGAPEFGDKPSEKSLWDRVWTLFVDTVLDAERRFTERASSFDASIDEVDVGLWRLRRKSWGVLRAKIEEEMMEGNILLKLRENFEDKFRYDDAGVPRIWRPNDDIESIYTRARESTLTLIPLLSRFRLAETNAPPPLDKWIGHTPSSATPADEEDLTPIGGVDEDEGKSLEEEMTMIGEAKKQDLTVRFKKTADGVYVEAKRSAIGGITQVPLYFYGLLLALGWNEIVAVLRNPAYFLLLFVCAVTAYVTYQLNLWGPIIKMTEAASQQALMEGKRRLREFLEASDTGLQAMAMSEGRNAEEYDMSNMKNRKSAGGFQNNRSHIDDADDDDDF</sequence>
<proteinExistence type="inferred from homology"/>
<gene>
    <name evidence="1" type="primary">SEY1</name>
    <name type="ORF">PABG_03379</name>
</gene>
<evidence type="ECO:0000255" key="1">
    <source>
        <dbReference type="HAMAP-Rule" id="MF_03109"/>
    </source>
</evidence>
<evidence type="ECO:0000255" key="2">
    <source>
        <dbReference type="PROSITE-ProRule" id="PRU01052"/>
    </source>
</evidence>
<evidence type="ECO:0000256" key="3">
    <source>
        <dbReference type="SAM" id="MobiDB-lite"/>
    </source>
</evidence>